<organism>
    <name type="scientific">Cuscuta reflexa</name>
    <name type="common">Southern Asian dodder</name>
    <dbReference type="NCBI Taxonomy" id="4129"/>
    <lineage>
        <taxon>Eukaryota</taxon>
        <taxon>Viridiplantae</taxon>
        <taxon>Streptophyta</taxon>
        <taxon>Embryophyta</taxon>
        <taxon>Tracheophyta</taxon>
        <taxon>Spermatophyta</taxon>
        <taxon>Magnoliopsida</taxon>
        <taxon>eudicotyledons</taxon>
        <taxon>Gunneridae</taxon>
        <taxon>Pentapetalae</taxon>
        <taxon>asterids</taxon>
        <taxon>lamiids</taxon>
        <taxon>Solanales</taxon>
        <taxon>Convolvulaceae</taxon>
        <taxon>Cuscuteae</taxon>
        <taxon>Cuscuta</taxon>
        <taxon>Cuscuta subgen. Monogynella</taxon>
    </lineage>
</organism>
<name>RR4_CUSRE</name>
<gene>
    <name type="primary">rps4</name>
</gene>
<accession>A7M968</accession>
<proteinExistence type="inferred from homology"/>
<evidence type="ECO:0000250" key="1"/>
<evidence type="ECO:0000305" key="2"/>
<reference key="1">
    <citation type="journal article" date="2007" name="BMC Plant Biol.">
        <title>Complete DNA sequences of the plastid genomes of two parasitic flowering plant species, Cuscuta reflexa and Cuscuta gronovii.</title>
        <authorList>
            <person name="Funk H.T."/>
            <person name="Berg S."/>
            <person name="Krupinska K."/>
            <person name="Maier U.-G."/>
            <person name="Krause K."/>
        </authorList>
    </citation>
    <scope>NUCLEOTIDE SEQUENCE [LARGE SCALE GENOMIC DNA]</scope>
</reference>
<geneLocation type="plastid"/>
<dbReference type="EMBL" id="AM711640">
    <property type="protein sequence ID" value="CAM98396.1"/>
    <property type="molecule type" value="Genomic_DNA"/>
</dbReference>
<dbReference type="RefSeq" id="YP_001430110.1">
    <property type="nucleotide sequence ID" value="NC_009766.1"/>
</dbReference>
<dbReference type="SMR" id="A7M968"/>
<dbReference type="GeneID" id="5536600"/>
<dbReference type="GO" id="GO:0009536">
    <property type="term" value="C:plastid"/>
    <property type="evidence" value="ECO:0007669"/>
    <property type="project" value="UniProtKB-SubCell"/>
</dbReference>
<dbReference type="GO" id="GO:0015935">
    <property type="term" value="C:small ribosomal subunit"/>
    <property type="evidence" value="ECO:0007669"/>
    <property type="project" value="InterPro"/>
</dbReference>
<dbReference type="GO" id="GO:0019843">
    <property type="term" value="F:rRNA binding"/>
    <property type="evidence" value="ECO:0007669"/>
    <property type="project" value="UniProtKB-KW"/>
</dbReference>
<dbReference type="GO" id="GO:0003735">
    <property type="term" value="F:structural constituent of ribosome"/>
    <property type="evidence" value="ECO:0007669"/>
    <property type="project" value="InterPro"/>
</dbReference>
<dbReference type="GO" id="GO:0042274">
    <property type="term" value="P:ribosomal small subunit biogenesis"/>
    <property type="evidence" value="ECO:0007669"/>
    <property type="project" value="TreeGrafter"/>
</dbReference>
<dbReference type="GO" id="GO:0006412">
    <property type="term" value="P:translation"/>
    <property type="evidence" value="ECO:0007669"/>
    <property type="project" value="InterPro"/>
</dbReference>
<dbReference type="CDD" id="cd00165">
    <property type="entry name" value="S4"/>
    <property type="match status" value="1"/>
</dbReference>
<dbReference type="FunFam" id="1.10.1050.10:FF:000002">
    <property type="entry name" value="30S ribosomal protein S4, chloroplastic"/>
    <property type="match status" value="1"/>
</dbReference>
<dbReference type="FunFam" id="3.10.290.10:FF:000081">
    <property type="entry name" value="30S ribosomal protein S4, chloroplastic"/>
    <property type="match status" value="1"/>
</dbReference>
<dbReference type="Gene3D" id="1.10.1050.10">
    <property type="entry name" value="Ribosomal Protein S4 Delta 41, Chain A, domain 1"/>
    <property type="match status" value="1"/>
</dbReference>
<dbReference type="Gene3D" id="3.10.290.10">
    <property type="entry name" value="RNA-binding S4 domain"/>
    <property type="match status" value="1"/>
</dbReference>
<dbReference type="HAMAP" id="MF_01306_B">
    <property type="entry name" value="Ribosomal_uS4_B"/>
    <property type="match status" value="1"/>
</dbReference>
<dbReference type="InterPro" id="IPR022801">
    <property type="entry name" value="Ribosomal_uS4"/>
</dbReference>
<dbReference type="InterPro" id="IPR005709">
    <property type="entry name" value="Ribosomal_uS4_bac-type"/>
</dbReference>
<dbReference type="InterPro" id="IPR018079">
    <property type="entry name" value="Ribosomal_uS4_CS"/>
</dbReference>
<dbReference type="InterPro" id="IPR001912">
    <property type="entry name" value="Ribosomal_uS4_N"/>
</dbReference>
<dbReference type="InterPro" id="IPR002942">
    <property type="entry name" value="S4_RNA-bd"/>
</dbReference>
<dbReference type="InterPro" id="IPR036986">
    <property type="entry name" value="S4_RNA-bd_sf"/>
</dbReference>
<dbReference type="NCBIfam" id="NF003717">
    <property type="entry name" value="PRK05327.1"/>
    <property type="match status" value="1"/>
</dbReference>
<dbReference type="NCBIfam" id="TIGR01017">
    <property type="entry name" value="rpsD_bact"/>
    <property type="match status" value="1"/>
</dbReference>
<dbReference type="PANTHER" id="PTHR11831">
    <property type="entry name" value="30S 40S RIBOSOMAL PROTEIN"/>
    <property type="match status" value="1"/>
</dbReference>
<dbReference type="PANTHER" id="PTHR11831:SF4">
    <property type="entry name" value="SMALL RIBOSOMAL SUBUNIT PROTEIN US4M"/>
    <property type="match status" value="1"/>
</dbReference>
<dbReference type="Pfam" id="PF00163">
    <property type="entry name" value="Ribosomal_S4"/>
    <property type="match status" value="1"/>
</dbReference>
<dbReference type="Pfam" id="PF01479">
    <property type="entry name" value="S4"/>
    <property type="match status" value="1"/>
</dbReference>
<dbReference type="SMART" id="SM01390">
    <property type="entry name" value="Ribosomal_S4"/>
    <property type="match status" value="1"/>
</dbReference>
<dbReference type="SMART" id="SM00363">
    <property type="entry name" value="S4"/>
    <property type="match status" value="1"/>
</dbReference>
<dbReference type="SUPFAM" id="SSF55174">
    <property type="entry name" value="Alpha-L RNA-binding motif"/>
    <property type="match status" value="1"/>
</dbReference>
<dbReference type="PROSITE" id="PS00632">
    <property type="entry name" value="RIBOSOMAL_S4"/>
    <property type="match status" value="1"/>
</dbReference>
<dbReference type="PROSITE" id="PS50889">
    <property type="entry name" value="S4"/>
    <property type="match status" value="1"/>
</dbReference>
<feature type="chain" id="PRO_0000322368" description="Small ribosomal subunit protein uS4c">
    <location>
        <begin position="1"/>
        <end position="201"/>
    </location>
</feature>
<feature type="domain" description="S4 RNA-binding">
    <location>
        <begin position="89"/>
        <end position="149"/>
    </location>
</feature>
<comment type="function">
    <text evidence="1">One of the primary rRNA binding proteins, it binds directly to 16S rRNA where it nucleates assembly of the body of the 30S subunit.</text>
</comment>
<comment type="function">
    <text evidence="1">With S5 and S12 plays an important role in translational accuracy.</text>
</comment>
<comment type="subunit">
    <text evidence="1">Part of the 30S ribosomal subunit. Contacts protein S5. The interaction surface between S4 and S5 is involved in control of translational fidelity (By similarity).</text>
</comment>
<comment type="subcellular location">
    <subcellularLocation>
        <location>Plastid</location>
    </subcellularLocation>
</comment>
<comment type="similarity">
    <text evidence="2">Belongs to the universal ribosomal protein uS4 family.</text>
</comment>
<sequence>MSRYRGPRFKKIRRLGALPGLTNKRPRTVRDLRNQSRSGKKSHYRIRLEEKQKLRFHYGLTERQLISYVRIARKAKGSTGEVLIQLLEMRLDNILFRLGMAYTIPAARQLVNHRHILVNGHIVDIPSYRCKPRDIITSKDKPKSGALIKNSIKAFPREELPNHLTLHPAPYKGLINQIIDTKWVGLKINELLVVEYYSRQT</sequence>
<protein>
    <recommendedName>
        <fullName evidence="2">Small ribosomal subunit protein uS4c</fullName>
    </recommendedName>
    <alternativeName>
        <fullName>Plastid 30S ribosomal protein S4</fullName>
    </alternativeName>
</protein>
<keyword id="KW-0934">Plastid</keyword>
<keyword id="KW-0687">Ribonucleoprotein</keyword>
<keyword id="KW-0689">Ribosomal protein</keyword>
<keyword id="KW-0694">RNA-binding</keyword>
<keyword id="KW-0699">rRNA-binding</keyword>